<keyword id="KW-0028">Amino-acid biosynthesis</keyword>
<keyword id="KW-0057">Aromatic amino acid biosynthesis</keyword>
<keyword id="KW-0210">Decarboxylase</keyword>
<keyword id="KW-0456">Lyase</keyword>
<keyword id="KW-1185">Reference proteome</keyword>
<keyword id="KW-0822">Tryptophan biosynthesis</keyword>
<name>TRPC_MICLC</name>
<comment type="catalytic activity">
    <reaction evidence="1">
        <text>1-(2-carboxyphenylamino)-1-deoxy-D-ribulose 5-phosphate + H(+) = (1S,2R)-1-C-(indol-3-yl)glycerol 3-phosphate + CO2 + H2O</text>
        <dbReference type="Rhea" id="RHEA:23476"/>
        <dbReference type="ChEBI" id="CHEBI:15377"/>
        <dbReference type="ChEBI" id="CHEBI:15378"/>
        <dbReference type="ChEBI" id="CHEBI:16526"/>
        <dbReference type="ChEBI" id="CHEBI:58613"/>
        <dbReference type="ChEBI" id="CHEBI:58866"/>
        <dbReference type="EC" id="4.1.1.48"/>
    </reaction>
</comment>
<comment type="pathway">
    <text evidence="1">Amino-acid biosynthesis; L-tryptophan biosynthesis; L-tryptophan from chorismate: step 4/5.</text>
</comment>
<comment type="similarity">
    <text evidence="1">Belongs to the TrpC family.</text>
</comment>
<accession>C5CBK6</accession>
<gene>
    <name evidence="1" type="primary">trpC</name>
    <name type="ordered locus">Mlut_10960</name>
</gene>
<evidence type="ECO:0000255" key="1">
    <source>
        <dbReference type="HAMAP-Rule" id="MF_00134"/>
    </source>
</evidence>
<organism>
    <name type="scientific">Micrococcus luteus (strain ATCC 4698 / DSM 20030 / JCM 1464 / CCM 169 / CCUG 5858 / IAM 1056 / NBRC 3333 / NCIMB 9278 / NCTC 2665 / VKM Ac-2230)</name>
    <name type="common">Micrococcus lysodeikticus</name>
    <dbReference type="NCBI Taxonomy" id="465515"/>
    <lineage>
        <taxon>Bacteria</taxon>
        <taxon>Bacillati</taxon>
        <taxon>Actinomycetota</taxon>
        <taxon>Actinomycetes</taxon>
        <taxon>Micrococcales</taxon>
        <taxon>Micrococcaceae</taxon>
        <taxon>Micrococcus</taxon>
    </lineage>
</organism>
<dbReference type="EC" id="4.1.1.48" evidence="1"/>
<dbReference type="EMBL" id="CP001628">
    <property type="protein sequence ID" value="ACS30603.1"/>
    <property type="molecule type" value="Genomic_DNA"/>
</dbReference>
<dbReference type="RefSeq" id="WP_010078760.1">
    <property type="nucleotide sequence ID" value="NC_012803.1"/>
</dbReference>
<dbReference type="SMR" id="C5CBK6"/>
<dbReference type="STRING" id="465515.Mlut_10960"/>
<dbReference type="EnsemblBacteria" id="ACS30603">
    <property type="protein sequence ID" value="ACS30603"/>
    <property type="gene ID" value="Mlut_10960"/>
</dbReference>
<dbReference type="GeneID" id="93345253"/>
<dbReference type="KEGG" id="mlu:Mlut_10960"/>
<dbReference type="PATRIC" id="fig|465515.4.peg.1039"/>
<dbReference type="eggNOG" id="COG0134">
    <property type="taxonomic scope" value="Bacteria"/>
</dbReference>
<dbReference type="HOGENOM" id="CLU_034247_2_0_11"/>
<dbReference type="UniPathway" id="UPA00035">
    <property type="reaction ID" value="UER00043"/>
</dbReference>
<dbReference type="Proteomes" id="UP000000738">
    <property type="component" value="Chromosome"/>
</dbReference>
<dbReference type="GO" id="GO:0004425">
    <property type="term" value="F:indole-3-glycerol-phosphate synthase activity"/>
    <property type="evidence" value="ECO:0007669"/>
    <property type="project" value="UniProtKB-UniRule"/>
</dbReference>
<dbReference type="GO" id="GO:0004640">
    <property type="term" value="F:phosphoribosylanthranilate isomerase activity"/>
    <property type="evidence" value="ECO:0007669"/>
    <property type="project" value="TreeGrafter"/>
</dbReference>
<dbReference type="GO" id="GO:0000162">
    <property type="term" value="P:L-tryptophan biosynthetic process"/>
    <property type="evidence" value="ECO:0007669"/>
    <property type="project" value="UniProtKB-UniRule"/>
</dbReference>
<dbReference type="CDD" id="cd00331">
    <property type="entry name" value="IGPS"/>
    <property type="match status" value="1"/>
</dbReference>
<dbReference type="FunFam" id="3.20.20.70:FF:000024">
    <property type="entry name" value="Indole-3-glycerol phosphate synthase"/>
    <property type="match status" value="1"/>
</dbReference>
<dbReference type="Gene3D" id="3.20.20.70">
    <property type="entry name" value="Aldolase class I"/>
    <property type="match status" value="1"/>
</dbReference>
<dbReference type="HAMAP" id="MF_00134_B">
    <property type="entry name" value="IGPS_B"/>
    <property type="match status" value="1"/>
</dbReference>
<dbReference type="InterPro" id="IPR013785">
    <property type="entry name" value="Aldolase_TIM"/>
</dbReference>
<dbReference type="InterPro" id="IPR045186">
    <property type="entry name" value="Indole-3-glycerol_P_synth"/>
</dbReference>
<dbReference type="InterPro" id="IPR013798">
    <property type="entry name" value="Indole-3-glycerol_P_synth_dom"/>
</dbReference>
<dbReference type="InterPro" id="IPR001468">
    <property type="entry name" value="Indole-3-GlycerolPSynthase_CS"/>
</dbReference>
<dbReference type="InterPro" id="IPR011060">
    <property type="entry name" value="RibuloseP-bd_barrel"/>
</dbReference>
<dbReference type="NCBIfam" id="NF001369">
    <property type="entry name" value="PRK00278.1-1"/>
    <property type="match status" value="1"/>
</dbReference>
<dbReference type="NCBIfam" id="NF001377">
    <property type="entry name" value="PRK00278.2-4"/>
    <property type="match status" value="1"/>
</dbReference>
<dbReference type="PANTHER" id="PTHR22854:SF2">
    <property type="entry name" value="INDOLE-3-GLYCEROL-PHOSPHATE SYNTHASE"/>
    <property type="match status" value="1"/>
</dbReference>
<dbReference type="PANTHER" id="PTHR22854">
    <property type="entry name" value="TRYPTOPHAN BIOSYNTHESIS PROTEIN"/>
    <property type="match status" value="1"/>
</dbReference>
<dbReference type="Pfam" id="PF00218">
    <property type="entry name" value="IGPS"/>
    <property type="match status" value="1"/>
</dbReference>
<dbReference type="SUPFAM" id="SSF51366">
    <property type="entry name" value="Ribulose-phoshate binding barrel"/>
    <property type="match status" value="1"/>
</dbReference>
<dbReference type="PROSITE" id="PS00614">
    <property type="entry name" value="IGPS"/>
    <property type="match status" value="1"/>
</dbReference>
<feature type="chain" id="PRO_1000203203" description="Indole-3-glycerol phosphate synthase">
    <location>
        <begin position="1"/>
        <end position="268"/>
    </location>
</feature>
<reference key="1">
    <citation type="journal article" date="2010" name="J. Bacteriol.">
        <title>Genome sequence of the Fleming strain of Micrococcus luteus, a simple free-living actinobacterium.</title>
        <authorList>
            <person name="Young M."/>
            <person name="Artsatbanov V."/>
            <person name="Beller H.R."/>
            <person name="Chandra G."/>
            <person name="Chater K.F."/>
            <person name="Dover L.G."/>
            <person name="Goh E.B."/>
            <person name="Kahan T."/>
            <person name="Kaprelyants A.S."/>
            <person name="Kyrpides N."/>
            <person name="Lapidus A."/>
            <person name="Lowry S.R."/>
            <person name="Lykidis A."/>
            <person name="Mahillon J."/>
            <person name="Markowitz V."/>
            <person name="Mavromatis K."/>
            <person name="Mukamolova G.V."/>
            <person name="Oren A."/>
            <person name="Rokem J.S."/>
            <person name="Smith M.C."/>
            <person name="Young D.I."/>
            <person name="Greenblatt C.L."/>
        </authorList>
    </citation>
    <scope>NUCLEOTIDE SEQUENCE [LARGE SCALE GENOMIC DNA]</scope>
    <source>
        <strain>ATCC 4698 / DSM 20030 / JCM 1464 / CCM 169 / CCUG 5858 / IAM 1056 / NBRC 3333 / NCIMB 9278 / NCTC 2665 / VKM Ac-2230</strain>
    </source>
</reference>
<proteinExistence type="inferred from homology"/>
<sequence length="268" mass="28236">MSVLQEIIDGVREDLEPRRRDLPEARLAELVAAAPAPRDAHAALHGGRTDPAGIRVISEVKRASPSKGALAEIPEPATLARAYERGGASAVSVLTEARRFGGSLADLDAVRAAVDLPVLRKDFTVTEYQIHEARAHGADLVLLIVAALDDAELAGFLQLTESLGMHALVEAHTPEEIERGVAAGARILGVNVRNLKTLDVDPARYAALADGLPEDVVRVAESGVESEAQIKAYAAAGADVVLVGEALVRHGAPEEALRAFRAASLTVR</sequence>
<protein>
    <recommendedName>
        <fullName evidence="1">Indole-3-glycerol phosphate synthase</fullName>
        <shortName evidence="1">IGPS</shortName>
        <ecNumber evidence="1">4.1.1.48</ecNumber>
    </recommendedName>
</protein>